<organism>
    <name type="scientific">Mycobacterium sp. (strain KMS)</name>
    <dbReference type="NCBI Taxonomy" id="189918"/>
    <lineage>
        <taxon>Bacteria</taxon>
        <taxon>Bacillati</taxon>
        <taxon>Actinomycetota</taxon>
        <taxon>Actinomycetes</taxon>
        <taxon>Mycobacteriales</taxon>
        <taxon>Mycobacteriaceae</taxon>
        <taxon>Mycobacterium</taxon>
    </lineage>
</organism>
<feature type="chain" id="PRO_0000303433" description="tRNA N6-adenosine threonylcarbamoyltransferase">
    <location>
        <begin position="1"/>
        <end position="340"/>
    </location>
</feature>
<feature type="binding site" evidence="1">
    <location>
        <position position="113"/>
    </location>
    <ligand>
        <name>Fe cation</name>
        <dbReference type="ChEBI" id="CHEBI:24875"/>
    </ligand>
</feature>
<feature type="binding site" evidence="1">
    <location>
        <position position="117"/>
    </location>
    <ligand>
        <name>Fe cation</name>
        <dbReference type="ChEBI" id="CHEBI:24875"/>
    </ligand>
</feature>
<feature type="binding site" evidence="1">
    <location>
        <begin position="135"/>
        <end position="139"/>
    </location>
    <ligand>
        <name>substrate</name>
    </ligand>
</feature>
<feature type="binding site" evidence="1">
    <location>
        <position position="169"/>
    </location>
    <ligand>
        <name>substrate</name>
    </ligand>
</feature>
<feature type="binding site" evidence="1">
    <location>
        <position position="182"/>
    </location>
    <ligand>
        <name>substrate</name>
    </ligand>
</feature>
<feature type="binding site" evidence="1">
    <location>
        <position position="186"/>
    </location>
    <ligand>
        <name>substrate</name>
    </ligand>
</feature>
<feature type="binding site" evidence="1">
    <location>
        <position position="274"/>
    </location>
    <ligand>
        <name>substrate</name>
    </ligand>
</feature>
<feature type="binding site" evidence="1">
    <location>
        <position position="302"/>
    </location>
    <ligand>
        <name>Fe cation</name>
        <dbReference type="ChEBI" id="CHEBI:24875"/>
    </ligand>
</feature>
<sequence>MIILAIESSCDETGVGIAELSEDGTVTLLADEVASSVDEHARFGGVVPEIASRAHLEALGPTMRRALDTAGVGRPDVVAATIGPGLAGALLVGVAAAKAYSAAWQVPFYGVNHLGGHLAADVYDHGPLPESVGLLVSGGHTHLLHVRSLGEPIIELGSTVDDAAGEAYDKVARLLGLGYPGGKVLDDLARQGDREAIVFPRGMTGPRDDPFAFSFSGLKTAVARYVESHPEASQADVAAGFQEAVADVLTRKAVRAAETLGVSTLLIAGGVAANSRLRELAEQRCAESGLTLRIPRPRLCTDNGAMIASFAAHLIAAGAPPSPLEAASDPGLPVVRSQVA</sequence>
<accession>A1UC23</accession>
<gene>
    <name evidence="1" type="primary">tsaD</name>
    <name type="synonym">gcp</name>
    <name type="ordered locus">Mkms_1168</name>
</gene>
<proteinExistence type="inferred from homology"/>
<protein>
    <recommendedName>
        <fullName evidence="1">tRNA N6-adenosine threonylcarbamoyltransferase</fullName>
        <ecNumber evidence="1">2.3.1.234</ecNumber>
    </recommendedName>
    <alternativeName>
        <fullName evidence="1">N6-L-threonylcarbamoyladenine synthase</fullName>
        <shortName evidence="1">t(6)A synthase</shortName>
    </alternativeName>
    <alternativeName>
        <fullName evidence="1">t(6)A37 threonylcarbamoyladenosine biosynthesis protein TsaD</fullName>
    </alternativeName>
    <alternativeName>
        <fullName evidence="1">tRNA threonylcarbamoyladenosine biosynthesis protein TsaD</fullName>
    </alternativeName>
</protein>
<comment type="function">
    <text evidence="1">Required for the formation of a threonylcarbamoyl group on adenosine at position 37 (t(6)A37) in tRNAs that read codons beginning with adenine. Is involved in the transfer of the threonylcarbamoyl moiety of threonylcarbamoyl-AMP (TC-AMP) to the N6 group of A37, together with TsaE and TsaB. TsaD likely plays a direct catalytic role in this reaction.</text>
</comment>
<comment type="catalytic activity">
    <reaction evidence="1">
        <text>L-threonylcarbamoyladenylate + adenosine(37) in tRNA = N(6)-L-threonylcarbamoyladenosine(37) in tRNA + AMP + H(+)</text>
        <dbReference type="Rhea" id="RHEA:37059"/>
        <dbReference type="Rhea" id="RHEA-COMP:10162"/>
        <dbReference type="Rhea" id="RHEA-COMP:10163"/>
        <dbReference type="ChEBI" id="CHEBI:15378"/>
        <dbReference type="ChEBI" id="CHEBI:73682"/>
        <dbReference type="ChEBI" id="CHEBI:74411"/>
        <dbReference type="ChEBI" id="CHEBI:74418"/>
        <dbReference type="ChEBI" id="CHEBI:456215"/>
        <dbReference type="EC" id="2.3.1.234"/>
    </reaction>
</comment>
<comment type="cofactor">
    <cofactor evidence="1">
        <name>Fe(2+)</name>
        <dbReference type="ChEBI" id="CHEBI:29033"/>
    </cofactor>
    <text evidence="1">Binds 1 Fe(2+) ion per subunit.</text>
</comment>
<comment type="subcellular location">
    <subcellularLocation>
        <location evidence="1">Cytoplasm</location>
    </subcellularLocation>
</comment>
<comment type="similarity">
    <text evidence="1">Belongs to the KAE1 / TsaD family.</text>
</comment>
<name>TSAD_MYCSK</name>
<evidence type="ECO:0000255" key="1">
    <source>
        <dbReference type="HAMAP-Rule" id="MF_01445"/>
    </source>
</evidence>
<reference key="1">
    <citation type="submission" date="2006-12" db="EMBL/GenBank/DDBJ databases">
        <title>Complete sequence of chromosome of Mycobacterium sp. KMS.</title>
        <authorList>
            <consortium name="US DOE Joint Genome Institute"/>
            <person name="Copeland A."/>
            <person name="Lucas S."/>
            <person name="Lapidus A."/>
            <person name="Barry K."/>
            <person name="Detter J.C."/>
            <person name="Glavina del Rio T."/>
            <person name="Hammon N."/>
            <person name="Israni S."/>
            <person name="Dalin E."/>
            <person name="Tice H."/>
            <person name="Pitluck S."/>
            <person name="Kiss H."/>
            <person name="Brettin T."/>
            <person name="Bruce D."/>
            <person name="Han C."/>
            <person name="Tapia R."/>
            <person name="Gilna P."/>
            <person name="Schmutz J."/>
            <person name="Larimer F."/>
            <person name="Land M."/>
            <person name="Hauser L."/>
            <person name="Kyrpides N."/>
            <person name="Mikhailova N."/>
            <person name="Miller C.D."/>
            <person name="Richardson P."/>
        </authorList>
    </citation>
    <scope>NUCLEOTIDE SEQUENCE [LARGE SCALE GENOMIC DNA]</scope>
    <source>
        <strain>KMS</strain>
    </source>
</reference>
<keyword id="KW-0012">Acyltransferase</keyword>
<keyword id="KW-0963">Cytoplasm</keyword>
<keyword id="KW-0408">Iron</keyword>
<keyword id="KW-0479">Metal-binding</keyword>
<keyword id="KW-0808">Transferase</keyword>
<keyword id="KW-0819">tRNA processing</keyword>
<dbReference type="EC" id="2.3.1.234" evidence="1"/>
<dbReference type="EMBL" id="CP000518">
    <property type="protein sequence ID" value="ABL90381.1"/>
    <property type="molecule type" value="Genomic_DNA"/>
</dbReference>
<dbReference type="SMR" id="A1UC23"/>
<dbReference type="STRING" id="189918.Mkms_1168"/>
<dbReference type="KEGG" id="mkm:Mkms_1168"/>
<dbReference type="HOGENOM" id="CLU_023208_0_2_11"/>
<dbReference type="OrthoDB" id="9806197at2"/>
<dbReference type="GO" id="GO:0005737">
    <property type="term" value="C:cytoplasm"/>
    <property type="evidence" value="ECO:0007669"/>
    <property type="project" value="UniProtKB-SubCell"/>
</dbReference>
<dbReference type="GO" id="GO:0005506">
    <property type="term" value="F:iron ion binding"/>
    <property type="evidence" value="ECO:0007669"/>
    <property type="project" value="UniProtKB-UniRule"/>
</dbReference>
<dbReference type="GO" id="GO:0061711">
    <property type="term" value="F:N(6)-L-threonylcarbamoyladenine synthase activity"/>
    <property type="evidence" value="ECO:0007669"/>
    <property type="project" value="UniProtKB-EC"/>
</dbReference>
<dbReference type="GO" id="GO:0002949">
    <property type="term" value="P:tRNA threonylcarbamoyladenosine modification"/>
    <property type="evidence" value="ECO:0007669"/>
    <property type="project" value="UniProtKB-UniRule"/>
</dbReference>
<dbReference type="CDD" id="cd24133">
    <property type="entry name" value="ASKHA_NBD_TsaD_bac"/>
    <property type="match status" value="1"/>
</dbReference>
<dbReference type="FunFam" id="3.30.420.40:FF:000012">
    <property type="entry name" value="tRNA N6-adenosine threonylcarbamoyltransferase"/>
    <property type="match status" value="1"/>
</dbReference>
<dbReference type="FunFam" id="3.30.420.40:FF:000040">
    <property type="entry name" value="tRNA N6-adenosine threonylcarbamoyltransferase"/>
    <property type="match status" value="1"/>
</dbReference>
<dbReference type="Gene3D" id="3.30.420.40">
    <property type="match status" value="2"/>
</dbReference>
<dbReference type="HAMAP" id="MF_01445">
    <property type="entry name" value="TsaD"/>
    <property type="match status" value="1"/>
</dbReference>
<dbReference type="InterPro" id="IPR043129">
    <property type="entry name" value="ATPase_NBD"/>
</dbReference>
<dbReference type="InterPro" id="IPR000905">
    <property type="entry name" value="Gcp-like_dom"/>
</dbReference>
<dbReference type="InterPro" id="IPR017861">
    <property type="entry name" value="KAE1/TsaD"/>
</dbReference>
<dbReference type="InterPro" id="IPR017860">
    <property type="entry name" value="Peptidase_M22_CS"/>
</dbReference>
<dbReference type="InterPro" id="IPR022450">
    <property type="entry name" value="TsaD"/>
</dbReference>
<dbReference type="NCBIfam" id="TIGR00329">
    <property type="entry name" value="gcp_kae1"/>
    <property type="match status" value="1"/>
</dbReference>
<dbReference type="NCBIfam" id="TIGR03723">
    <property type="entry name" value="T6A_TsaD_YgjD"/>
    <property type="match status" value="1"/>
</dbReference>
<dbReference type="PANTHER" id="PTHR11735">
    <property type="entry name" value="TRNA N6-ADENOSINE THREONYLCARBAMOYLTRANSFERASE"/>
    <property type="match status" value="1"/>
</dbReference>
<dbReference type="PANTHER" id="PTHR11735:SF6">
    <property type="entry name" value="TRNA N6-ADENOSINE THREONYLCARBAMOYLTRANSFERASE, MITOCHONDRIAL"/>
    <property type="match status" value="1"/>
</dbReference>
<dbReference type="Pfam" id="PF00814">
    <property type="entry name" value="TsaD"/>
    <property type="match status" value="1"/>
</dbReference>
<dbReference type="PRINTS" id="PR00789">
    <property type="entry name" value="OSIALOPTASE"/>
</dbReference>
<dbReference type="SUPFAM" id="SSF53067">
    <property type="entry name" value="Actin-like ATPase domain"/>
    <property type="match status" value="1"/>
</dbReference>
<dbReference type="PROSITE" id="PS01016">
    <property type="entry name" value="GLYCOPROTEASE"/>
    <property type="match status" value="1"/>
</dbReference>